<organism>
    <name type="scientific">Rhizobium etli (strain CIAT 652)</name>
    <dbReference type="NCBI Taxonomy" id="491916"/>
    <lineage>
        <taxon>Bacteria</taxon>
        <taxon>Pseudomonadati</taxon>
        <taxon>Pseudomonadota</taxon>
        <taxon>Alphaproteobacteria</taxon>
        <taxon>Hyphomicrobiales</taxon>
        <taxon>Rhizobiaceae</taxon>
        <taxon>Rhizobium/Agrobacterium group</taxon>
        <taxon>Rhizobium</taxon>
    </lineage>
</organism>
<evidence type="ECO:0000255" key="1">
    <source>
        <dbReference type="HAMAP-Rule" id="MF_01389"/>
    </source>
</evidence>
<name>UREG_RHIE6</name>
<dbReference type="EMBL" id="CP001074">
    <property type="protein sequence ID" value="ACE92489.1"/>
    <property type="molecule type" value="Genomic_DNA"/>
</dbReference>
<dbReference type="SMR" id="B3PXA8"/>
<dbReference type="KEGG" id="rec:RHECIAT_CH0003543"/>
<dbReference type="eggNOG" id="COG0378">
    <property type="taxonomic scope" value="Bacteria"/>
</dbReference>
<dbReference type="HOGENOM" id="CLU_072144_1_0_5"/>
<dbReference type="Proteomes" id="UP000008817">
    <property type="component" value="Chromosome"/>
</dbReference>
<dbReference type="GO" id="GO:0005737">
    <property type="term" value="C:cytoplasm"/>
    <property type="evidence" value="ECO:0007669"/>
    <property type="project" value="UniProtKB-SubCell"/>
</dbReference>
<dbReference type="GO" id="GO:0005525">
    <property type="term" value="F:GTP binding"/>
    <property type="evidence" value="ECO:0007669"/>
    <property type="project" value="UniProtKB-KW"/>
</dbReference>
<dbReference type="GO" id="GO:0003924">
    <property type="term" value="F:GTPase activity"/>
    <property type="evidence" value="ECO:0007669"/>
    <property type="project" value="InterPro"/>
</dbReference>
<dbReference type="GO" id="GO:0016151">
    <property type="term" value="F:nickel cation binding"/>
    <property type="evidence" value="ECO:0007669"/>
    <property type="project" value="UniProtKB-UniRule"/>
</dbReference>
<dbReference type="GO" id="GO:0043419">
    <property type="term" value="P:urea catabolic process"/>
    <property type="evidence" value="ECO:0007669"/>
    <property type="project" value="InterPro"/>
</dbReference>
<dbReference type="CDD" id="cd05540">
    <property type="entry name" value="UreG"/>
    <property type="match status" value="1"/>
</dbReference>
<dbReference type="FunFam" id="3.40.50.300:FF:000208">
    <property type="entry name" value="Urease accessory protein UreG"/>
    <property type="match status" value="1"/>
</dbReference>
<dbReference type="Gene3D" id="3.40.50.300">
    <property type="entry name" value="P-loop containing nucleotide triphosphate hydrolases"/>
    <property type="match status" value="1"/>
</dbReference>
<dbReference type="HAMAP" id="MF_01389">
    <property type="entry name" value="UreG"/>
    <property type="match status" value="1"/>
</dbReference>
<dbReference type="InterPro" id="IPR003495">
    <property type="entry name" value="CobW/HypB/UreG_nucleotide-bd"/>
</dbReference>
<dbReference type="InterPro" id="IPR027417">
    <property type="entry name" value="P-loop_NTPase"/>
</dbReference>
<dbReference type="InterPro" id="IPR004400">
    <property type="entry name" value="UreG"/>
</dbReference>
<dbReference type="NCBIfam" id="TIGR00101">
    <property type="entry name" value="ureG"/>
    <property type="match status" value="1"/>
</dbReference>
<dbReference type="PANTHER" id="PTHR31715">
    <property type="entry name" value="UREASE ACCESSORY PROTEIN G"/>
    <property type="match status" value="1"/>
</dbReference>
<dbReference type="PANTHER" id="PTHR31715:SF0">
    <property type="entry name" value="UREASE ACCESSORY PROTEIN G"/>
    <property type="match status" value="1"/>
</dbReference>
<dbReference type="Pfam" id="PF02492">
    <property type="entry name" value="cobW"/>
    <property type="match status" value="1"/>
</dbReference>
<dbReference type="PIRSF" id="PIRSF005624">
    <property type="entry name" value="Ni-bind_GTPase"/>
    <property type="match status" value="1"/>
</dbReference>
<dbReference type="SUPFAM" id="SSF52540">
    <property type="entry name" value="P-loop containing nucleoside triphosphate hydrolases"/>
    <property type="match status" value="1"/>
</dbReference>
<gene>
    <name evidence="1" type="primary">ureG</name>
    <name type="ordered locus">RHECIAT_CH0003543</name>
</gene>
<protein>
    <recommendedName>
        <fullName evidence="1">Urease accessory protein UreG</fullName>
    </recommendedName>
</protein>
<comment type="function">
    <text evidence="1">Facilitates the functional incorporation of the urease nickel metallocenter. This process requires GTP hydrolysis, probably effectuated by UreG.</text>
</comment>
<comment type="subunit">
    <text evidence="1">Homodimer. UreD, UreF and UreG form a complex that acts as a GTP-hydrolysis-dependent molecular chaperone, activating the urease apoprotein by helping to assemble the nickel containing metallocenter of UreC. The UreE protein probably delivers the nickel.</text>
</comment>
<comment type="subcellular location">
    <subcellularLocation>
        <location evidence="1">Cytoplasm</location>
    </subcellularLocation>
</comment>
<comment type="similarity">
    <text evidence="1">Belongs to the SIMIBI class G3E GTPase family. UreG subfamily.</text>
</comment>
<proteinExistence type="inferred from homology"/>
<reference key="1">
    <citation type="journal article" date="2010" name="Appl. Environ. Microbiol.">
        <title>Conserved symbiotic plasmid DNA sequences in the multireplicon pangenomic structure of Rhizobium etli.</title>
        <authorList>
            <person name="Gonzalez V."/>
            <person name="Acosta J.L."/>
            <person name="Santamaria R.I."/>
            <person name="Bustos P."/>
            <person name="Fernandez J.L."/>
            <person name="Hernandez Gonzalez I.L."/>
            <person name="Diaz R."/>
            <person name="Flores M."/>
            <person name="Palacios R."/>
            <person name="Mora J."/>
            <person name="Davila G."/>
        </authorList>
    </citation>
    <scope>NUCLEOTIDE SEQUENCE [LARGE SCALE GENOMIC DNA]</scope>
    <source>
        <strain>CIAT 652</strain>
    </source>
</reference>
<accession>B3PXA8</accession>
<sequence length="203" mass="21762">MKSRNGPLRVGIGGPVGSGKTALTEKLCKAMRDDYSVAVVTNDIYTTEDAEALVRMQALPSDRIVGVETGGCPHTAIREDATINLQAIAGLNERFPDLDVVFIESGGDNLAATFSPDLADITIYVISVCQGEEIPRKGGPGITRSDLLVINKKDLAPHVGADLEVMDRDATRMRASRPFVFSDMKRGDGINSIVSFLREQGGL</sequence>
<keyword id="KW-0143">Chaperone</keyword>
<keyword id="KW-0963">Cytoplasm</keyword>
<keyword id="KW-0342">GTP-binding</keyword>
<keyword id="KW-0996">Nickel insertion</keyword>
<keyword id="KW-0547">Nucleotide-binding</keyword>
<feature type="chain" id="PRO_1000145209" description="Urease accessory protein UreG">
    <location>
        <begin position="1"/>
        <end position="203"/>
    </location>
</feature>
<feature type="binding site" evidence="1">
    <location>
        <begin position="14"/>
        <end position="21"/>
    </location>
    <ligand>
        <name>GTP</name>
        <dbReference type="ChEBI" id="CHEBI:37565"/>
    </ligand>
</feature>